<evidence type="ECO:0000255" key="1">
    <source>
        <dbReference type="HAMAP-Rule" id="MF_01587"/>
    </source>
</evidence>
<evidence type="ECO:0000305" key="2"/>
<dbReference type="EC" id="6.5.1.2" evidence="1"/>
<dbReference type="EMBL" id="CP000802">
    <property type="protein sequence ID" value="ABV08063.1"/>
    <property type="status" value="ALT_INIT"/>
    <property type="molecule type" value="Genomic_DNA"/>
</dbReference>
<dbReference type="RefSeq" id="WP_000870062.1">
    <property type="nucleotide sequence ID" value="NC_009800.1"/>
</dbReference>
<dbReference type="SMR" id="A8A6A9"/>
<dbReference type="KEGG" id="ecx:EcHS_A3858"/>
<dbReference type="HOGENOM" id="CLU_489786_0_0_6"/>
<dbReference type="GO" id="GO:0003911">
    <property type="term" value="F:DNA ligase (NAD+) activity"/>
    <property type="evidence" value="ECO:0007669"/>
    <property type="project" value="UniProtKB-UniRule"/>
</dbReference>
<dbReference type="GO" id="GO:0006281">
    <property type="term" value="P:DNA repair"/>
    <property type="evidence" value="ECO:0007669"/>
    <property type="project" value="UniProtKB-KW"/>
</dbReference>
<dbReference type="GO" id="GO:0006260">
    <property type="term" value="P:DNA replication"/>
    <property type="evidence" value="ECO:0007669"/>
    <property type="project" value="UniProtKB-KW"/>
</dbReference>
<dbReference type="FunFam" id="1.10.287.610:FF:000003">
    <property type="entry name" value="DNA ligase B"/>
    <property type="match status" value="1"/>
</dbReference>
<dbReference type="FunFam" id="2.40.50.140:FF:000139">
    <property type="entry name" value="DNA ligase B"/>
    <property type="match status" value="1"/>
</dbReference>
<dbReference type="FunFam" id="3.30.470.30:FF:000007">
    <property type="entry name" value="DNA ligase B"/>
    <property type="match status" value="1"/>
</dbReference>
<dbReference type="Gene3D" id="3.30.470.30">
    <property type="entry name" value="DNA ligase/mRNA capping enzyme"/>
    <property type="match status" value="1"/>
</dbReference>
<dbReference type="Gene3D" id="1.10.287.610">
    <property type="entry name" value="Helix hairpin bin"/>
    <property type="match status" value="1"/>
</dbReference>
<dbReference type="Gene3D" id="2.40.50.140">
    <property type="entry name" value="Nucleic acid-binding proteins"/>
    <property type="match status" value="1"/>
</dbReference>
<dbReference type="HAMAP" id="MF_01587">
    <property type="entry name" value="DNA_ligase_B"/>
    <property type="match status" value="1"/>
</dbReference>
<dbReference type="InterPro" id="IPR018239">
    <property type="entry name" value="DNA_ligase_AS"/>
</dbReference>
<dbReference type="InterPro" id="IPR020923">
    <property type="entry name" value="DNA_ligase_B"/>
</dbReference>
<dbReference type="InterPro" id="IPR033136">
    <property type="entry name" value="DNA_ligase_CS"/>
</dbReference>
<dbReference type="InterPro" id="IPR013839">
    <property type="entry name" value="DNAligase_adenylation"/>
</dbReference>
<dbReference type="InterPro" id="IPR013840">
    <property type="entry name" value="DNAligase_N"/>
</dbReference>
<dbReference type="InterPro" id="IPR012340">
    <property type="entry name" value="NA-bd_OB-fold"/>
</dbReference>
<dbReference type="InterPro" id="IPR050326">
    <property type="entry name" value="NAD_dep_DNA_ligaseB"/>
</dbReference>
<dbReference type="InterPro" id="IPR004150">
    <property type="entry name" value="NAD_DNA_ligase_OB"/>
</dbReference>
<dbReference type="InterPro" id="IPR010994">
    <property type="entry name" value="RuvA_2-like"/>
</dbReference>
<dbReference type="NCBIfam" id="NF005987">
    <property type="entry name" value="PRK08097.1"/>
    <property type="match status" value="1"/>
</dbReference>
<dbReference type="PANTHER" id="PTHR47810">
    <property type="entry name" value="DNA LIGASE"/>
    <property type="match status" value="1"/>
</dbReference>
<dbReference type="PANTHER" id="PTHR47810:SF1">
    <property type="entry name" value="DNA LIGASE B"/>
    <property type="match status" value="1"/>
</dbReference>
<dbReference type="Pfam" id="PF01653">
    <property type="entry name" value="DNA_ligase_aden"/>
    <property type="match status" value="1"/>
</dbReference>
<dbReference type="Pfam" id="PF03120">
    <property type="entry name" value="DNA_ligase_OB"/>
    <property type="match status" value="1"/>
</dbReference>
<dbReference type="SMART" id="SM00532">
    <property type="entry name" value="LIGANc"/>
    <property type="match status" value="1"/>
</dbReference>
<dbReference type="SUPFAM" id="SSF56091">
    <property type="entry name" value="DNA ligase/mRNA capping enzyme, catalytic domain"/>
    <property type="match status" value="1"/>
</dbReference>
<dbReference type="SUPFAM" id="SSF50249">
    <property type="entry name" value="Nucleic acid-binding proteins"/>
    <property type="match status" value="1"/>
</dbReference>
<dbReference type="SUPFAM" id="SSF47781">
    <property type="entry name" value="RuvA domain 2-like"/>
    <property type="match status" value="1"/>
</dbReference>
<dbReference type="PROSITE" id="PS01055">
    <property type="entry name" value="DNA_LIGASE_N1"/>
    <property type="match status" value="1"/>
</dbReference>
<dbReference type="PROSITE" id="PS01056">
    <property type="entry name" value="DNA_LIGASE_N2"/>
    <property type="match status" value="1"/>
</dbReference>
<gene>
    <name evidence="1" type="primary">ligB</name>
    <name type="ordered locus">EcHS_A3858</name>
</gene>
<accession>A8A6A9</accession>
<protein>
    <recommendedName>
        <fullName evidence="1">DNA ligase B</fullName>
        <ecNumber evidence="1">6.5.1.2</ecNumber>
    </recommendedName>
    <alternativeName>
        <fullName evidence="1">Polydeoxyribonucleotide synthase [NAD(+)] B</fullName>
    </alternativeName>
</protein>
<name>LIGB_ECOHS</name>
<sequence length="560" mass="63193">MKVWMAILISILCWQSSVWAVCPAWSPARAQEEISRLQQQIKQWDDVYWKEGKSEVEDGVYDQLSARLTQWQRCFGSEPRDVMMPPLNGAVMHPVAHTGVRKMVDKNALSLWMRERSDLWVQPKVDGVAVTLVYRDGKLNKAISRGNGLKGEDWTQKVSLISAVPQTVSGPLANSTLQGEIFLQREGHIQQQMGGINARAKVAGLMMRQDDSDTLNSLGVFVWAWPDGPQLMSDRLKELATAGFTLTQTYTRAVKNADEVARVRNEWWKAELPFVTDGVVVRAAKEPESRHWLPGQAEWLVAWKYQPVAQVAEVKAIQFAVGKSGKISVVASLAPVMLDDKKVQRVNIGSVRRWQEWDIAPGDQILVSLAGQGIPRIDDVVWRGAERTKPTPPENRFNSLTCYFASDVCQEQFISRLVWLGAKQVLGLDGIGEAGWRALHQTHRFEHIFSWLLLTPEQLQNTPGIAKSKSAQLWHQFNLARKQPFTRWVMAMGIPLTRAALNASDERSWSQLLFSTEQFWQQLPGTGSGRARQVIEWKENAQIKKLGSWLAAQQITGFEP</sequence>
<reference key="1">
    <citation type="journal article" date="2008" name="J. Bacteriol.">
        <title>The pangenome structure of Escherichia coli: comparative genomic analysis of E. coli commensal and pathogenic isolates.</title>
        <authorList>
            <person name="Rasko D.A."/>
            <person name="Rosovitz M.J."/>
            <person name="Myers G.S.A."/>
            <person name="Mongodin E.F."/>
            <person name="Fricke W.F."/>
            <person name="Gajer P."/>
            <person name="Crabtree J."/>
            <person name="Sebaihia M."/>
            <person name="Thomson N.R."/>
            <person name="Chaudhuri R."/>
            <person name="Henderson I.R."/>
            <person name="Sperandio V."/>
            <person name="Ravel J."/>
        </authorList>
    </citation>
    <scope>NUCLEOTIDE SEQUENCE [LARGE SCALE GENOMIC DNA]</scope>
    <source>
        <strain>HS</strain>
    </source>
</reference>
<organism>
    <name type="scientific">Escherichia coli O9:H4 (strain HS)</name>
    <dbReference type="NCBI Taxonomy" id="331112"/>
    <lineage>
        <taxon>Bacteria</taxon>
        <taxon>Pseudomonadati</taxon>
        <taxon>Pseudomonadota</taxon>
        <taxon>Gammaproteobacteria</taxon>
        <taxon>Enterobacterales</taxon>
        <taxon>Enterobacteriaceae</taxon>
        <taxon>Escherichia</taxon>
    </lineage>
</organism>
<comment type="function">
    <text evidence="1">Catalyzes the formation of phosphodiester linkages between 5'-phosphoryl and 3'-hydroxyl groups in double-stranded DNA using NAD as a coenzyme and as the energy source for the reaction.</text>
</comment>
<comment type="catalytic activity">
    <reaction evidence="1">
        <text>NAD(+) + (deoxyribonucleotide)n-3'-hydroxyl + 5'-phospho-(deoxyribonucleotide)m = (deoxyribonucleotide)n+m + AMP + beta-nicotinamide D-nucleotide.</text>
        <dbReference type="EC" id="6.5.1.2"/>
    </reaction>
</comment>
<comment type="similarity">
    <text evidence="1">Belongs to the NAD-dependent DNA ligase family. LigB subfamily.</text>
</comment>
<comment type="sequence caution" evidence="2">
    <conflict type="erroneous initiation">
        <sequence resource="EMBL-CDS" id="ABV08063"/>
    </conflict>
</comment>
<feature type="chain" id="PRO_0000318798" description="DNA ligase B">
    <location>
        <begin position="1"/>
        <end position="560"/>
    </location>
</feature>
<feature type="active site" description="N6-AMP-lysine intermediate" evidence="1">
    <location>
        <position position="124"/>
    </location>
</feature>
<proteinExistence type="inferred from homology"/>
<keyword id="KW-0227">DNA damage</keyword>
<keyword id="KW-0234">DNA repair</keyword>
<keyword id="KW-0235">DNA replication</keyword>
<keyword id="KW-0436">Ligase</keyword>
<keyword id="KW-0520">NAD</keyword>